<feature type="chain" id="PRO_0000200646" description="Protein Wnt-7a">
    <location>
        <begin position="1" status="less than"/>
        <end position="123" status="greater than"/>
    </location>
</feature>
<feature type="region of interest" description="Disordered linker" evidence="1">
    <location>
        <begin position="33"/>
        <end position="61"/>
    </location>
</feature>
<feature type="lipid moiety-binding region" description="O-palmitoleoyl serine; by PORCN" evidence="5">
    <location>
        <position position="1"/>
    </location>
</feature>
<feature type="glycosylation site" description="N-linked (GlcNAc...) asparagine" evidence="6">
    <location>
        <position position="90"/>
    </location>
</feature>
<feature type="disulfide bond" evidence="4">
    <location>
        <begin position="89"/>
        <end position="104"/>
    </location>
</feature>
<feature type="non-terminal residue">
    <location>
        <position position="1"/>
    </location>
</feature>
<feature type="non-terminal residue">
    <location>
        <position position="123"/>
    </location>
</feature>
<gene>
    <name type="primary">WNT7A</name>
</gene>
<protein>
    <recommendedName>
        <fullName>Protein Wnt-7a</fullName>
    </recommendedName>
</protein>
<organism>
    <name type="scientific">Anser caerulescens</name>
    <name type="common">Snow goose</name>
    <name type="synonym">Chen caerulescens</name>
    <dbReference type="NCBI Taxonomy" id="8849"/>
    <lineage>
        <taxon>Eukaryota</taxon>
        <taxon>Metazoa</taxon>
        <taxon>Chordata</taxon>
        <taxon>Craniata</taxon>
        <taxon>Vertebrata</taxon>
        <taxon>Euteleostomi</taxon>
        <taxon>Archelosauria</taxon>
        <taxon>Archosauria</taxon>
        <taxon>Dinosauria</taxon>
        <taxon>Saurischia</taxon>
        <taxon>Theropoda</taxon>
        <taxon>Coelurosauria</taxon>
        <taxon>Aves</taxon>
        <taxon>Neognathae</taxon>
        <taxon>Galloanserae</taxon>
        <taxon>Anseriformes</taxon>
        <taxon>Anatidae</taxon>
        <taxon>Anserinae</taxon>
        <taxon>Anser</taxon>
    </lineage>
</organism>
<keyword id="KW-0217">Developmental protein</keyword>
<keyword id="KW-1015">Disulfide bond</keyword>
<keyword id="KW-0272">Extracellular matrix</keyword>
<keyword id="KW-0325">Glycoprotein</keyword>
<keyword id="KW-0449">Lipoprotein</keyword>
<keyword id="KW-0964">Secreted</keyword>
<keyword id="KW-0879">Wnt signaling pathway</keyword>
<proteinExistence type="inferred from homology"/>
<dbReference type="EMBL" id="M91261">
    <property type="protein sequence ID" value="AAA49320.1"/>
    <property type="molecule type" value="Genomic_DNA"/>
</dbReference>
<dbReference type="SMR" id="P28110"/>
<dbReference type="GlyCosmos" id="P28110">
    <property type="glycosylation" value="1 site, No reported glycans"/>
</dbReference>
<dbReference type="GO" id="GO:0005615">
    <property type="term" value="C:extracellular space"/>
    <property type="evidence" value="ECO:0007669"/>
    <property type="project" value="TreeGrafter"/>
</dbReference>
<dbReference type="GO" id="GO:0005125">
    <property type="term" value="F:cytokine activity"/>
    <property type="evidence" value="ECO:0007669"/>
    <property type="project" value="TreeGrafter"/>
</dbReference>
<dbReference type="GO" id="GO:0005109">
    <property type="term" value="F:frizzled binding"/>
    <property type="evidence" value="ECO:0007669"/>
    <property type="project" value="TreeGrafter"/>
</dbReference>
<dbReference type="GO" id="GO:0048513">
    <property type="term" value="P:animal organ development"/>
    <property type="evidence" value="ECO:0007669"/>
    <property type="project" value="UniProtKB-ARBA"/>
</dbReference>
<dbReference type="GO" id="GO:0060070">
    <property type="term" value="P:canonical Wnt signaling pathway"/>
    <property type="evidence" value="ECO:0007669"/>
    <property type="project" value="TreeGrafter"/>
</dbReference>
<dbReference type="GO" id="GO:0045165">
    <property type="term" value="P:cell fate commitment"/>
    <property type="evidence" value="ECO:0007669"/>
    <property type="project" value="TreeGrafter"/>
</dbReference>
<dbReference type="GO" id="GO:0030182">
    <property type="term" value="P:neuron differentiation"/>
    <property type="evidence" value="ECO:0007669"/>
    <property type="project" value="TreeGrafter"/>
</dbReference>
<dbReference type="GO" id="GO:0046330">
    <property type="term" value="P:positive regulation of JNK cascade"/>
    <property type="evidence" value="ECO:0007669"/>
    <property type="project" value="TreeGrafter"/>
</dbReference>
<dbReference type="Gene3D" id="3.30.2460.20">
    <property type="match status" value="1"/>
</dbReference>
<dbReference type="InterPro" id="IPR005817">
    <property type="entry name" value="Wnt"/>
</dbReference>
<dbReference type="InterPro" id="IPR013300">
    <property type="entry name" value="Wnt7"/>
</dbReference>
<dbReference type="InterPro" id="IPR043158">
    <property type="entry name" value="Wnt_C"/>
</dbReference>
<dbReference type="PANTHER" id="PTHR12027:SF78">
    <property type="entry name" value="PROTEIN WNT-7A"/>
    <property type="match status" value="1"/>
</dbReference>
<dbReference type="PANTHER" id="PTHR12027">
    <property type="entry name" value="WNT RELATED"/>
    <property type="match status" value="1"/>
</dbReference>
<dbReference type="Pfam" id="PF00110">
    <property type="entry name" value="wnt"/>
    <property type="match status" value="1"/>
</dbReference>
<dbReference type="PRINTS" id="PR01891">
    <property type="entry name" value="WNT7PROTEIN"/>
</dbReference>
<dbReference type="SMART" id="SM00097">
    <property type="entry name" value="WNT1"/>
    <property type="match status" value="1"/>
</dbReference>
<name>WNT7A_ANSCE</name>
<accession>P28110</accession>
<sequence>SGSCTTKTCWTTLPKFRELGYILKDKYNEAVQVEPVRASRNKRPTFLKIKKPLSYRKPMDTDLVYIEKSPNYCEEDPVTGSVGTQGRMCNKTAQQSNGCDLMCCGRGYNTHQYSRVWQCNCKF</sequence>
<comment type="function">
    <text evidence="1 2">Ligand for members of the frizzled family of seven transmembrane receptors that functions in the canonical Wnt/beta-catenin signaling pathway (By similarity). Plays an important role in embryonic development, including dorsal versus ventral patterning during limb development, skeleton development and urogenital tract development. Required for central nervous system (CNS) angiogenesis and blood-brain barrier regulation (By similarity).</text>
</comment>
<comment type="subcellular location">
    <subcellularLocation>
        <location evidence="2">Secreted</location>
        <location evidence="2">Extracellular space</location>
        <location evidence="2">Extracellular matrix</location>
    </subcellularLocation>
    <subcellularLocation>
        <location evidence="2">Secreted</location>
    </subcellularLocation>
</comment>
<comment type="PTM">
    <text evidence="3 5">Palmitoleoylation is required for efficient binding to frizzled receptors. Depalmitoleoylation leads to Wnt signaling pathway inhibition.</text>
</comment>
<comment type="similarity">
    <text evidence="7">Belongs to the Wnt family.</text>
</comment>
<reference key="1">
    <citation type="journal article" date="1992" name="Proc. Natl. Acad. Sci. U.S.A.">
        <title>Diversification of the Wnt gene family on the ancestral lineage of vertebrates.</title>
        <authorList>
            <person name="Sidow A."/>
        </authorList>
    </citation>
    <scope>NUCLEOTIDE SEQUENCE [GENOMIC DNA]</scope>
</reference>
<evidence type="ECO:0000250" key="1">
    <source>
        <dbReference type="UniProtKB" id="O00755"/>
    </source>
</evidence>
<evidence type="ECO:0000250" key="2">
    <source>
        <dbReference type="UniProtKB" id="P24383"/>
    </source>
</evidence>
<evidence type="ECO:0000250" key="3">
    <source>
        <dbReference type="UniProtKB" id="P27467"/>
    </source>
</evidence>
<evidence type="ECO:0000250" key="4">
    <source>
        <dbReference type="UniProtKB" id="P28026"/>
    </source>
</evidence>
<evidence type="ECO:0000250" key="5">
    <source>
        <dbReference type="UniProtKB" id="P56704"/>
    </source>
</evidence>
<evidence type="ECO:0000255" key="6"/>
<evidence type="ECO:0000305" key="7"/>